<accession>B9DY13</accession>
<comment type="function">
    <text evidence="1">Component of the acetyl coenzyme A carboxylase (ACC) complex. Biotin carboxylase (BC) catalyzes the carboxylation of biotin on its carrier protein (BCCP) and then the CO(2) group is transferred by the transcarboxylase to acetyl-CoA to form malonyl-CoA.</text>
</comment>
<comment type="catalytic activity">
    <reaction evidence="1">
        <text>N(6)-carboxybiotinyl-L-lysyl-[protein] + acetyl-CoA = N(6)-biotinyl-L-lysyl-[protein] + malonyl-CoA</text>
        <dbReference type="Rhea" id="RHEA:54728"/>
        <dbReference type="Rhea" id="RHEA-COMP:10505"/>
        <dbReference type="Rhea" id="RHEA-COMP:10506"/>
        <dbReference type="ChEBI" id="CHEBI:57288"/>
        <dbReference type="ChEBI" id="CHEBI:57384"/>
        <dbReference type="ChEBI" id="CHEBI:83144"/>
        <dbReference type="ChEBI" id="CHEBI:83145"/>
        <dbReference type="EC" id="2.1.3.15"/>
    </reaction>
</comment>
<comment type="cofactor">
    <cofactor evidence="1">
        <name>Zn(2+)</name>
        <dbReference type="ChEBI" id="CHEBI:29105"/>
    </cofactor>
    <text evidence="1">Binds 1 zinc ion per subunit.</text>
</comment>
<comment type="pathway">
    <text evidence="1">Lipid metabolism; malonyl-CoA biosynthesis; malonyl-CoA from acetyl-CoA: step 1/1.</text>
</comment>
<comment type="subunit">
    <text evidence="1">Acetyl-CoA carboxylase is a heterohexamer composed of biotin carboxyl carrier protein (AccB), biotin carboxylase (AccC) and two subunits each of ACCase subunit alpha (AccA) and ACCase subunit beta (AccD).</text>
</comment>
<comment type="subcellular location">
    <subcellularLocation>
        <location evidence="1">Cytoplasm</location>
    </subcellularLocation>
</comment>
<comment type="similarity">
    <text evidence="1">Belongs to the AccD/PCCB family.</text>
</comment>
<comment type="sequence caution" evidence="3">
    <conflict type="erroneous initiation">
        <sequence resource="EMBL-CDS" id="BAH05138"/>
    </conflict>
    <text>Extended N-terminus.</text>
</comment>
<organism>
    <name type="scientific">Clostridium kluyveri (strain NBRC 12016)</name>
    <dbReference type="NCBI Taxonomy" id="583346"/>
    <lineage>
        <taxon>Bacteria</taxon>
        <taxon>Bacillati</taxon>
        <taxon>Bacillota</taxon>
        <taxon>Clostridia</taxon>
        <taxon>Eubacteriales</taxon>
        <taxon>Clostridiaceae</taxon>
        <taxon>Clostridium</taxon>
    </lineage>
</organism>
<sequence>MLNKFFKKTKYITVSQRALGDIHDDFTKKPSIPNGMWVKCDGCGKVLYKNDMEKNNKVCYHCGYHFRMNALERLELILDKESFYEFDKDITAANPIEFKGYEDKIKNMQNKTNIKEAVITGKGTIGREEAVVCIMDSNFMMGSMGSVVGEKITRAVEKSIELKLPLIIFTTSGGARMQEGIFSLMQMAKVSGAISRLNEEGLLYLSVLTDPTTGGVTASFAMIGDIILAEPGALIGFAGKRVIEQTIKQKLPEGFQKAEFLLQHGFIDNIVSRENLKETLRKILVIHGRGN</sequence>
<name>ACCD_CLOK1</name>
<dbReference type="EC" id="2.1.3.15" evidence="1"/>
<dbReference type="EMBL" id="AP009049">
    <property type="protein sequence ID" value="BAH05138.1"/>
    <property type="status" value="ALT_INIT"/>
    <property type="molecule type" value="Genomic_DNA"/>
</dbReference>
<dbReference type="RefSeq" id="WP_011988707.1">
    <property type="nucleotide sequence ID" value="NC_011837.1"/>
</dbReference>
<dbReference type="SMR" id="B9DY13"/>
<dbReference type="KEGG" id="ckr:CKR_0087"/>
<dbReference type="HOGENOM" id="CLU_015486_1_1_9"/>
<dbReference type="UniPathway" id="UPA00655">
    <property type="reaction ID" value="UER00711"/>
</dbReference>
<dbReference type="Proteomes" id="UP000007969">
    <property type="component" value="Chromosome"/>
</dbReference>
<dbReference type="GO" id="GO:0009317">
    <property type="term" value="C:acetyl-CoA carboxylase complex"/>
    <property type="evidence" value="ECO:0007669"/>
    <property type="project" value="InterPro"/>
</dbReference>
<dbReference type="GO" id="GO:0003989">
    <property type="term" value="F:acetyl-CoA carboxylase activity"/>
    <property type="evidence" value="ECO:0007669"/>
    <property type="project" value="InterPro"/>
</dbReference>
<dbReference type="GO" id="GO:0005524">
    <property type="term" value="F:ATP binding"/>
    <property type="evidence" value="ECO:0007669"/>
    <property type="project" value="UniProtKB-KW"/>
</dbReference>
<dbReference type="GO" id="GO:0016743">
    <property type="term" value="F:carboxyl- or carbamoyltransferase activity"/>
    <property type="evidence" value="ECO:0007669"/>
    <property type="project" value="UniProtKB-UniRule"/>
</dbReference>
<dbReference type="GO" id="GO:0008270">
    <property type="term" value="F:zinc ion binding"/>
    <property type="evidence" value="ECO:0007669"/>
    <property type="project" value="UniProtKB-UniRule"/>
</dbReference>
<dbReference type="GO" id="GO:0006633">
    <property type="term" value="P:fatty acid biosynthetic process"/>
    <property type="evidence" value="ECO:0007669"/>
    <property type="project" value="UniProtKB-KW"/>
</dbReference>
<dbReference type="GO" id="GO:2001295">
    <property type="term" value="P:malonyl-CoA biosynthetic process"/>
    <property type="evidence" value="ECO:0007669"/>
    <property type="project" value="UniProtKB-UniRule"/>
</dbReference>
<dbReference type="Gene3D" id="3.90.226.10">
    <property type="entry name" value="2-enoyl-CoA Hydratase, Chain A, domain 1"/>
    <property type="match status" value="1"/>
</dbReference>
<dbReference type="HAMAP" id="MF_01395">
    <property type="entry name" value="AcetylCoA_CT_beta"/>
    <property type="match status" value="1"/>
</dbReference>
<dbReference type="InterPro" id="IPR034733">
    <property type="entry name" value="AcCoA_carboxyl_beta"/>
</dbReference>
<dbReference type="InterPro" id="IPR000438">
    <property type="entry name" value="Acetyl_CoA_COase_Trfase_b_su"/>
</dbReference>
<dbReference type="InterPro" id="IPR029045">
    <property type="entry name" value="ClpP/crotonase-like_dom_sf"/>
</dbReference>
<dbReference type="InterPro" id="IPR011762">
    <property type="entry name" value="COA_CT_N"/>
</dbReference>
<dbReference type="InterPro" id="IPR041010">
    <property type="entry name" value="Znf-ACC"/>
</dbReference>
<dbReference type="NCBIfam" id="TIGR00515">
    <property type="entry name" value="accD"/>
    <property type="match status" value="1"/>
</dbReference>
<dbReference type="PANTHER" id="PTHR42995">
    <property type="entry name" value="ACETYL-COENZYME A CARBOXYLASE CARBOXYL TRANSFERASE SUBUNIT BETA, CHLOROPLASTIC"/>
    <property type="match status" value="1"/>
</dbReference>
<dbReference type="PANTHER" id="PTHR42995:SF5">
    <property type="entry name" value="ACETYL-COENZYME A CARBOXYLASE CARBOXYL TRANSFERASE SUBUNIT BETA, CHLOROPLASTIC"/>
    <property type="match status" value="1"/>
</dbReference>
<dbReference type="Pfam" id="PF01039">
    <property type="entry name" value="Carboxyl_trans"/>
    <property type="match status" value="1"/>
</dbReference>
<dbReference type="Pfam" id="PF17848">
    <property type="entry name" value="Zn_ribbon_ACC"/>
    <property type="match status" value="1"/>
</dbReference>
<dbReference type="PRINTS" id="PR01070">
    <property type="entry name" value="ACCCTRFRASEB"/>
</dbReference>
<dbReference type="SUPFAM" id="SSF52096">
    <property type="entry name" value="ClpP/crotonase"/>
    <property type="match status" value="1"/>
</dbReference>
<dbReference type="PROSITE" id="PS50980">
    <property type="entry name" value="COA_CT_NTER"/>
    <property type="match status" value="1"/>
</dbReference>
<keyword id="KW-0067">ATP-binding</keyword>
<keyword id="KW-0963">Cytoplasm</keyword>
<keyword id="KW-0275">Fatty acid biosynthesis</keyword>
<keyword id="KW-0276">Fatty acid metabolism</keyword>
<keyword id="KW-0444">Lipid biosynthesis</keyword>
<keyword id="KW-0443">Lipid metabolism</keyword>
<keyword id="KW-0479">Metal-binding</keyword>
<keyword id="KW-0547">Nucleotide-binding</keyword>
<keyword id="KW-0808">Transferase</keyword>
<keyword id="KW-0862">Zinc</keyword>
<keyword id="KW-0863">Zinc-finger</keyword>
<gene>
    <name evidence="1" type="primary">accD</name>
    <name type="ordered locus">CKR_0087</name>
</gene>
<reference key="1">
    <citation type="submission" date="2005-09" db="EMBL/GenBank/DDBJ databases">
        <title>Complete genome sequence of Clostridium kluyveri and comparative genomics of Clostridia species.</title>
        <authorList>
            <person name="Inui M."/>
            <person name="Nonaka H."/>
            <person name="Shinoda Y."/>
            <person name="Ikenaga Y."/>
            <person name="Abe M."/>
            <person name="Naito K."/>
            <person name="Vertes A.A."/>
            <person name="Yukawa H."/>
        </authorList>
    </citation>
    <scope>NUCLEOTIDE SEQUENCE [LARGE SCALE GENOMIC DNA]</scope>
    <source>
        <strain>NBRC 12016</strain>
    </source>
</reference>
<proteinExistence type="inferred from homology"/>
<evidence type="ECO:0000255" key="1">
    <source>
        <dbReference type="HAMAP-Rule" id="MF_01395"/>
    </source>
</evidence>
<evidence type="ECO:0000255" key="2">
    <source>
        <dbReference type="PROSITE-ProRule" id="PRU01136"/>
    </source>
</evidence>
<evidence type="ECO:0000305" key="3"/>
<protein>
    <recommendedName>
        <fullName evidence="1">Acetyl-coenzyme A carboxylase carboxyl transferase subunit beta</fullName>
        <shortName evidence="1">ACCase subunit beta</shortName>
        <shortName evidence="1">Acetyl-CoA carboxylase carboxyltransferase subunit beta</shortName>
        <ecNumber evidence="1">2.1.3.15</ecNumber>
    </recommendedName>
</protein>
<feature type="chain" id="PRO_0000389729" description="Acetyl-coenzyme A carboxylase carboxyl transferase subunit beta">
    <location>
        <begin position="1"/>
        <end position="291"/>
    </location>
</feature>
<feature type="domain" description="CoA carboxyltransferase N-terminal" evidence="2">
    <location>
        <begin position="36"/>
        <end position="291"/>
    </location>
</feature>
<feature type="zinc finger region" description="C4-type" evidence="1">
    <location>
        <begin position="40"/>
        <end position="62"/>
    </location>
</feature>
<feature type="binding site" evidence="1">
    <location>
        <position position="40"/>
    </location>
    <ligand>
        <name>Zn(2+)</name>
        <dbReference type="ChEBI" id="CHEBI:29105"/>
    </ligand>
</feature>
<feature type="binding site" evidence="1">
    <location>
        <position position="43"/>
    </location>
    <ligand>
        <name>Zn(2+)</name>
        <dbReference type="ChEBI" id="CHEBI:29105"/>
    </ligand>
</feature>
<feature type="binding site" evidence="1">
    <location>
        <position position="59"/>
    </location>
    <ligand>
        <name>Zn(2+)</name>
        <dbReference type="ChEBI" id="CHEBI:29105"/>
    </ligand>
</feature>
<feature type="binding site" evidence="1">
    <location>
        <position position="62"/>
    </location>
    <ligand>
        <name>Zn(2+)</name>
        <dbReference type="ChEBI" id="CHEBI:29105"/>
    </ligand>
</feature>